<protein>
    <recommendedName>
        <fullName evidence="1">Small ribosomal subunit protein uS4</fullName>
    </recommendedName>
    <alternativeName>
        <fullName evidence="3">30S ribosomal protein S4</fullName>
    </alternativeName>
</protein>
<feature type="chain" id="PRO_0000228912" description="Small ribosomal subunit protein uS4">
    <location>
        <begin position="1"/>
        <end position="202"/>
    </location>
</feature>
<feature type="domain" description="S4 RNA-binding" evidence="1">
    <location>
        <begin position="90"/>
        <end position="152"/>
    </location>
</feature>
<feature type="region of interest" description="Disordered" evidence="2">
    <location>
        <begin position="1"/>
        <end position="43"/>
    </location>
</feature>
<feature type="compositionally biased region" description="Basic residues" evidence="2">
    <location>
        <begin position="1"/>
        <end position="13"/>
    </location>
</feature>
<name>RS4_PROMT</name>
<organism>
    <name type="scientific">Prochlorococcus marinus (strain NATL2A)</name>
    <dbReference type="NCBI Taxonomy" id="59920"/>
    <lineage>
        <taxon>Bacteria</taxon>
        <taxon>Bacillati</taxon>
        <taxon>Cyanobacteriota</taxon>
        <taxon>Cyanophyceae</taxon>
        <taxon>Synechococcales</taxon>
        <taxon>Prochlorococcaceae</taxon>
        <taxon>Prochlorococcus</taxon>
    </lineage>
</organism>
<keyword id="KW-1185">Reference proteome</keyword>
<keyword id="KW-0687">Ribonucleoprotein</keyword>
<keyword id="KW-0689">Ribosomal protein</keyword>
<keyword id="KW-0694">RNA-binding</keyword>
<keyword id="KW-0699">rRNA-binding</keyword>
<proteinExistence type="inferred from homology"/>
<comment type="function">
    <text evidence="1">One of the primary rRNA binding proteins, it binds directly to 16S rRNA where it nucleates assembly of the body of the 30S subunit.</text>
</comment>
<comment type="function">
    <text evidence="1">With S5 and S12 plays an important role in translational accuracy.</text>
</comment>
<comment type="subunit">
    <text evidence="1">Part of the 30S ribosomal subunit. Contacts protein S5. The interaction surface between S4 and S5 is involved in control of translational fidelity.</text>
</comment>
<comment type="similarity">
    <text evidence="1">Belongs to the universal ribosomal protein uS4 family.</text>
</comment>
<evidence type="ECO:0000255" key="1">
    <source>
        <dbReference type="HAMAP-Rule" id="MF_01306"/>
    </source>
</evidence>
<evidence type="ECO:0000256" key="2">
    <source>
        <dbReference type="SAM" id="MobiDB-lite"/>
    </source>
</evidence>
<evidence type="ECO:0000305" key="3"/>
<gene>
    <name evidence="1" type="primary">rpsD</name>
    <name evidence="1" type="synonym">rps4</name>
    <name type="ordered locus">PMN2A_1744</name>
</gene>
<reference key="1">
    <citation type="journal article" date="2007" name="PLoS Genet.">
        <title>Patterns and implications of gene gain and loss in the evolution of Prochlorococcus.</title>
        <authorList>
            <person name="Kettler G.C."/>
            <person name="Martiny A.C."/>
            <person name="Huang K."/>
            <person name="Zucker J."/>
            <person name="Coleman M.L."/>
            <person name="Rodrigue S."/>
            <person name="Chen F."/>
            <person name="Lapidus A."/>
            <person name="Ferriera S."/>
            <person name="Johnson J."/>
            <person name="Steglich C."/>
            <person name="Church G.M."/>
            <person name="Richardson P."/>
            <person name="Chisholm S.W."/>
        </authorList>
    </citation>
    <scope>NUCLEOTIDE SEQUENCE [LARGE SCALE GENOMIC DNA]</scope>
    <source>
        <strain>NATL2A</strain>
    </source>
</reference>
<sequence length="202" mass="22909">MSRYRGPRLRITRRLGDLPGLTRKAAKRSHPPGQHGQARRKRSEYAIRLEEKQKLRFNYGISERQLVRYVKKARAQEGSTGTNLLKLLENRLDNVCFRLGFGPTIPGSRQLVNHGHVTVNGRITDIASYQCKAGDVIAIRDNKASKQLAQANLEFPGLANVPPHLELDKTKLSAKISAKTDREWVAIEINELLVVEYYSRKV</sequence>
<accession>Q46LZ9</accession>
<dbReference type="EMBL" id="CP000095">
    <property type="protein sequence ID" value="AAZ59232.1"/>
    <property type="molecule type" value="Genomic_DNA"/>
</dbReference>
<dbReference type="RefSeq" id="WP_011294377.1">
    <property type="nucleotide sequence ID" value="NC_007335.2"/>
</dbReference>
<dbReference type="SMR" id="Q46LZ9"/>
<dbReference type="STRING" id="59920.PMN2A_1744"/>
<dbReference type="KEGG" id="pmn:PMN2A_1744"/>
<dbReference type="HOGENOM" id="CLU_092403_0_5_3"/>
<dbReference type="OrthoDB" id="9803672at2"/>
<dbReference type="PhylomeDB" id="Q46LZ9"/>
<dbReference type="Proteomes" id="UP000002535">
    <property type="component" value="Chromosome"/>
</dbReference>
<dbReference type="GO" id="GO:0015935">
    <property type="term" value="C:small ribosomal subunit"/>
    <property type="evidence" value="ECO:0007669"/>
    <property type="project" value="InterPro"/>
</dbReference>
<dbReference type="GO" id="GO:0019843">
    <property type="term" value="F:rRNA binding"/>
    <property type="evidence" value="ECO:0007669"/>
    <property type="project" value="UniProtKB-UniRule"/>
</dbReference>
<dbReference type="GO" id="GO:0003735">
    <property type="term" value="F:structural constituent of ribosome"/>
    <property type="evidence" value="ECO:0007669"/>
    <property type="project" value="InterPro"/>
</dbReference>
<dbReference type="GO" id="GO:0042274">
    <property type="term" value="P:ribosomal small subunit biogenesis"/>
    <property type="evidence" value="ECO:0007669"/>
    <property type="project" value="TreeGrafter"/>
</dbReference>
<dbReference type="GO" id="GO:0006412">
    <property type="term" value="P:translation"/>
    <property type="evidence" value="ECO:0007669"/>
    <property type="project" value="UniProtKB-UniRule"/>
</dbReference>
<dbReference type="CDD" id="cd00165">
    <property type="entry name" value="S4"/>
    <property type="match status" value="1"/>
</dbReference>
<dbReference type="FunFam" id="3.10.290.10:FF:000001">
    <property type="entry name" value="30S ribosomal protein S4"/>
    <property type="match status" value="1"/>
</dbReference>
<dbReference type="FunFam" id="1.10.1050.10:FF:000002">
    <property type="entry name" value="30S ribosomal protein S4, chloroplastic"/>
    <property type="match status" value="1"/>
</dbReference>
<dbReference type="Gene3D" id="1.10.1050.10">
    <property type="entry name" value="Ribosomal Protein S4 Delta 41, Chain A, domain 1"/>
    <property type="match status" value="1"/>
</dbReference>
<dbReference type="Gene3D" id="3.10.290.10">
    <property type="entry name" value="RNA-binding S4 domain"/>
    <property type="match status" value="1"/>
</dbReference>
<dbReference type="HAMAP" id="MF_01306_B">
    <property type="entry name" value="Ribosomal_uS4_B"/>
    <property type="match status" value="1"/>
</dbReference>
<dbReference type="InterPro" id="IPR022801">
    <property type="entry name" value="Ribosomal_uS4"/>
</dbReference>
<dbReference type="InterPro" id="IPR005709">
    <property type="entry name" value="Ribosomal_uS4_bac-type"/>
</dbReference>
<dbReference type="InterPro" id="IPR018079">
    <property type="entry name" value="Ribosomal_uS4_CS"/>
</dbReference>
<dbReference type="InterPro" id="IPR001912">
    <property type="entry name" value="Ribosomal_uS4_N"/>
</dbReference>
<dbReference type="InterPro" id="IPR002942">
    <property type="entry name" value="S4_RNA-bd"/>
</dbReference>
<dbReference type="InterPro" id="IPR036986">
    <property type="entry name" value="S4_RNA-bd_sf"/>
</dbReference>
<dbReference type="NCBIfam" id="NF003717">
    <property type="entry name" value="PRK05327.1"/>
    <property type="match status" value="1"/>
</dbReference>
<dbReference type="NCBIfam" id="TIGR01017">
    <property type="entry name" value="rpsD_bact"/>
    <property type="match status" value="1"/>
</dbReference>
<dbReference type="PANTHER" id="PTHR11831">
    <property type="entry name" value="30S 40S RIBOSOMAL PROTEIN"/>
    <property type="match status" value="1"/>
</dbReference>
<dbReference type="PANTHER" id="PTHR11831:SF4">
    <property type="entry name" value="SMALL RIBOSOMAL SUBUNIT PROTEIN US4M"/>
    <property type="match status" value="1"/>
</dbReference>
<dbReference type="Pfam" id="PF00163">
    <property type="entry name" value="Ribosomal_S4"/>
    <property type="match status" value="1"/>
</dbReference>
<dbReference type="Pfam" id="PF01479">
    <property type="entry name" value="S4"/>
    <property type="match status" value="1"/>
</dbReference>
<dbReference type="SMART" id="SM01390">
    <property type="entry name" value="Ribosomal_S4"/>
    <property type="match status" value="1"/>
</dbReference>
<dbReference type="SMART" id="SM00363">
    <property type="entry name" value="S4"/>
    <property type="match status" value="1"/>
</dbReference>
<dbReference type="SUPFAM" id="SSF55174">
    <property type="entry name" value="Alpha-L RNA-binding motif"/>
    <property type="match status" value="1"/>
</dbReference>
<dbReference type="PROSITE" id="PS00632">
    <property type="entry name" value="RIBOSOMAL_S4"/>
    <property type="match status" value="1"/>
</dbReference>
<dbReference type="PROSITE" id="PS50889">
    <property type="entry name" value="S4"/>
    <property type="match status" value="1"/>
</dbReference>